<evidence type="ECO:0000255" key="1">
    <source>
        <dbReference type="HAMAP-Rule" id="MF_01856"/>
    </source>
</evidence>
<keyword id="KW-0963">Cytoplasm</keyword>
<keyword id="KW-0489">Methyltransferase</keyword>
<keyword id="KW-0694">RNA-binding</keyword>
<keyword id="KW-0698">rRNA processing</keyword>
<keyword id="KW-0949">S-adenosyl-L-methionine</keyword>
<keyword id="KW-0808">Transferase</keyword>
<name>RSMB_YERPN</name>
<organism>
    <name type="scientific">Yersinia pestis bv. Antiqua (strain Nepal516)</name>
    <dbReference type="NCBI Taxonomy" id="377628"/>
    <lineage>
        <taxon>Bacteria</taxon>
        <taxon>Pseudomonadati</taxon>
        <taxon>Pseudomonadota</taxon>
        <taxon>Gammaproteobacteria</taxon>
        <taxon>Enterobacterales</taxon>
        <taxon>Yersiniaceae</taxon>
        <taxon>Yersinia</taxon>
    </lineage>
</organism>
<proteinExistence type="inferred from homology"/>
<protein>
    <recommendedName>
        <fullName evidence="1">Ribosomal RNA small subunit methyltransferase B</fullName>
        <ecNumber evidence="1">2.1.1.176</ecNumber>
    </recommendedName>
    <alternativeName>
        <fullName evidence="1">16S rRNA m5C967 methyltransferase</fullName>
    </alternativeName>
    <alternativeName>
        <fullName evidence="1">rRNA (cytosine-C(5)-)-methyltransferase RsmB</fullName>
    </alternativeName>
</protein>
<feature type="chain" id="PRO_0000366186" description="Ribosomal RNA small subunit methyltransferase B">
    <location>
        <begin position="1"/>
        <end position="429"/>
    </location>
</feature>
<feature type="active site" description="Nucleophile" evidence="1">
    <location>
        <position position="375"/>
    </location>
</feature>
<feature type="binding site" evidence="1">
    <location>
        <begin position="254"/>
        <end position="260"/>
    </location>
    <ligand>
        <name>S-adenosyl-L-methionine</name>
        <dbReference type="ChEBI" id="CHEBI:59789"/>
    </ligand>
</feature>
<feature type="binding site" evidence="1">
    <location>
        <position position="277"/>
    </location>
    <ligand>
        <name>S-adenosyl-L-methionine</name>
        <dbReference type="ChEBI" id="CHEBI:59789"/>
    </ligand>
</feature>
<feature type="binding site" evidence="1">
    <location>
        <position position="303"/>
    </location>
    <ligand>
        <name>S-adenosyl-L-methionine</name>
        <dbReference type="ChEBI" id="CHEBI:59789"/>
    </ligand>
</feature>
<feature type="binding site" evidence="1">
    <location>
        <position position="322"/>
    </location>
    <ligand>
        <name>S-adenosyl-L-methionine</name>
        <dbReference type="ChEBI" id="CHEBI:59789"/>
    </ligand>
</feature>
<reference key="1">
    <citation type="journal article" date="2006" name="J. Bacteriol.">
        <title>Complete genome sequence of Yersinia pestis strains Antiqua and Nepal516: evidence of gene reduction in an emerging pathogen.</title>
        <authorList>
            <person name="Chain P.S.G."/>
            <person name="Hu P."/>
            <person name="Malfatti S.A."/>
            <person name="Radnedge L."/>
            <person name="Larimer F."/>
            <person name="Vergez L.M."/>
            <person name="Worsham P."/>
            <person name="Chu M.C."/>
            <person name="Andersen G.L."/>
        </authorList>
    </citation>
    <scope>NUCLEOTIDE SEQUENCE [LARGE SCALE GENOMIC DNA]</scope>
    <source>
        <strain>Nepal516</strain>
    </source>
</reference>
<reference key="2">
    <citation type="submission" date="2009-04" db="EMBL/GenBank/DDBJ databases">
        <title>Yersinia pestis Nepal516A whole genome shotgun sequencing project.</title>
        <authorList>
            <person name="Plunkett G. III"/>
            <person name="Anderson B.D."/>
            <person name="Baumler D.J."/>
            <person name="Burland V."/>
            <person name="Cabot E.L."/>
            <person name="Glasner J.D."/>
            <person name="Mau B."/>
            <person name="Neeno-Eckwall E."/>
            <person name="Perna N.T."/>
            <person name="Munk A.C."/>
            <person name="Tapia R."/>
            <person name="Green L.D."/>
            <person name="Rogers Y.C."/>
            <person name="Detter J.C."/>
            <person name="Bruce D.C."/>
            <person name="Brettin T.S."/>
        </authorList>
    </citation>
    <scope>NUCLEOTIDE SEQUENCE [LARGE SCALE GENOMIC DNA]</scope>
    <source>
        <strain>Nepal516</strain>
    </source>
</reference>
<comment type="function">
    <text evidence="1">Specifically methylates the cytosine at position 967 (m5C967) of 16S rRNA.</text>
</comment>
<comment type="catalytic activity">
    <reaction evidence="1">
        <text>cytidine(967) in 16S rRNA + S-adenosyl-L-methionine = 5-methylcytidine(967) in 16S rRNA + S-adenosyl-L-homocysteine + H(+)</text>
        <dbReference type="Rhea" id="RHEA:42748"/>
        <dbReference type="Rhea" id="RHEA-COMP:10219"/>
        <dbReference type="Rhea" id="RHEA-COMP:10220"/>
        <dbReference type="ChEBI" id="CHEBI:15378"/>
        <dbReference type="ChEBI" id="CHEBI:57856"/>
        <dbReference type="ChEBI" id="CHEBI:59789"/>
        <dbReference type="ChEBI" id="CHEBI:74483"/>
        <dbReference type="ChEBI" id="CHEBI:82748"/>
        <dbReference type="EC" id="2.1.1.176"/>
    </reaction>
</comment>
<comment type="subcellular location">
    <subcellularLocation>
        <location evidence="1">Cytoplasm</location>
    </subcellularLocation>
</comment>
<comment type="similarity">
    <text evidence="1">Belongs to the class I-like SAM-binding methyltransferase superfamily. RsmB/NOP family.</text>
</comment>
<gene>
    <name evidence="1" type="primary">rsmB</name>
    <name evidence="1" type="synonym">sun</name>
    <name type="ordered locus">YPN_3829</name>
    <name type="ORF">YP516_4351</name>
</gene>
<accession>Q1CCX4</accession>
<accession>D1Q2J0</accession>
<dbReference type="EC" id="2.1.1.176" evidence="1"/>
<dbReference type="EMBL" id="CP000305">
    <property type="protein sequence ID" value="ABG20156.1"/>
    <property type="molecule type" value="Genomic_DNA"/>
</dbReference>
<dbReference type="EMBL" id="ACNQ01000019">
    <property type="protein sequence ID" value="EEO74743.1"/>
    <property type="molecule type" value="Genomic_DNA"/>
</dbReference>
<dbReference type="RefSeq" id="WP_002215705.1">
    <property type="nucleotide sequence ID" value="NZ_ACNQ01000019.1"/>
</dbReference>
<dbReference type="SMR" id="Q1CCX4"/>
<dbReference type="GeneID" id="57974364"/>
<dbReference type="KEGG" id="ypn:YPN_3829"/>
<dbReference type="HOGENOM" id="CLU_005316_0_4_6"/>
<dbReference type="Proteomes" id="UP000008936">
    <property type="component" value="Chromosome"/>
</dbReference>
<dbReference type="GO" id="GO:0005829">
    <property type="term" value="C:cytosol"/>
    <property type="evidence" value="ECO:0007669"/>
    <property type="project" value="TreeGrafter"/>
</dbReference>
<dbReference type="GO" id="GO:0003723">
    <property type="term" value="F:RNA binding"/>
    <property type="evidence" value="ECO:0007669"/>
    <property type="project" value="UniProtKB-KW"/>
</dbReference>
<dbReference type="GO" id="GO:0009383">
    <property type="term" value="F:rRNA (cytosine-C5-)-methyltransferase activity"/>
    <property type="evidence" value="ECO:0007669"/>
    <property type="project" value="TreeGrafter"/>
</dbReference>
<dbReference type="GO" id="GO:0006355">
    <property type="term" value="P:regulation of DNA-templated transcription"/>
    <property type="evidence" value="ECO:0007669"/>
    <property type="project" value="InterPro"/>
</dbReference>
<dbReference type="GO" id="GO:0070475">
    <property type="term" value="P:rRNA base methylation"/>
    <property type="evidence" value="ECO:0007669"/>
    <property type="project" value="TreeGrafter"/>
</dbReference>
<dbReference type="CDD" id="cd02440">
    <property type="entry name" value="AdoMet_MTases"/>
    <property type="match status" value="1"/>
</dbReference>
<dbReference type="CDD" id="cd00620">
    <property type="entry name" value="Methyltransferase_Sun"/>
    <property type="match status" value="1"/>
</dbReference>
<dbReference type="FunFam" id="1.10.287.730:FF:000001">
    <property type="entry name" value="Ribosomal RNA small subunit methyltransferase B"/>
    <property type="match status" value="1"/>
</dbReference>
<dbReference type="FunFam" id="1.10.940.10:FF:000002">
    <property type="entry name" value="Ribosomal RNA small subunit methyltransferase B"/>
    <property type="match status" value="1"/>
</dbReference>
<dbReference type="FunFam" id="3.30.70.1170:FF:000002">
    <property type="entry name" value="Ribosomal RNA small subunit methyltransferase B"/>
    <property type="match status" value="1"/>
</dbReference>
<dbReference type="FunFam" id="3.40.50.150:FF:000022">
    <property type="entry name" value="Ribosomal RNA small subunit methyltransferase B"/>
    <property type="match status" value="1"/>
</dbReference>
<dbReference type="Gene3D" id="1.10.287.730">
    <property type="entry name" value="Helix hairpin bin"/>
    <property type="match status" value="1"/>
</dbReference>
<dbReference type="Gene3D" id="1.10.940.10">
    <property type="entry name" value="NusB-like"/>
    <property type="match status" value="1"/>
</dbReference>
<dbReference type="Gene3D" id="3.30.70.1170">
    <property type="entry name" value="Sun protein, domain 3"/>
    <property type="match status" value="1"/>
</dbReference>
<dbReference type="Gene3D" id="3.40.50.150">
    <property type="entry name" value="Vaccinia Virus protein VP39"/>
    <property type="match status" value="1"/>
</dbReference>
<dbReference type="HAMAP" id="MF_01856">
    <property type="entry name" value="16SrRNA_methyltr_B"/>
    <property type="match status" value="1"/>
</dbReference>
<dbReference type="InterPro" id="IPR049560">
    <property type="entry name" value="MeTrfase_RsmB-F_NOP2_cat"/>
</dbReference>
<dbReference type="InterPro" id="IPR001678">
    <property type="entry name" value="MeTrfase_RsmB-F_NOP2_dom"/>
</dbReference>
<dbReference type="InterPro" id="IPR035926">
    <property type="entry name" value="NusB-like_sf"/>
</dbReference>
<dbReference type="InterPro" id="IPR006027">
    <property type="entry name" value="NusB_RsmB_TIM44"/>
</dbReference>
<dbReference type="InterPro" id="IPR023267">
    <property type="entry name" value="RCMT"/>
</dbReference>
<dbReference type="InterPro" id="IPR004573">
    <property type="entry name" value="rRNA_ssu_MeTfrase_B"/>
</dbReference>
<dbReference type="InterPro" id="IPR023541">
    <property type="entry name" value="rRNA_ssu_MeTfrase_B_ent"/>
</dbReference>
<dbReference type="InterPro" id="IPR054728">
    <property type="entry name" value="RsmB-like_ferredoxin"/>
</dbReference>
<dbReference type="InterPro" id="IPR048019">
    <property type="entry name" value="RsmB-like_N"/>
</dbReference>
<dbReference type="InterPro" id="IPR018314">
    <property type="entry name" value="RsmB/NOL1/NOP2-like_CS"/>
</dbReference>
<dbReference type="InterPro" id="IPR029063">
    <property type="entry name" value="SAM-dependent_MTases_sf"/>
</dbReference>
<dbReference type="NCBIfam" id="NF008149">
    <property type="entry name" value="PRK10901.1"/>
    <property type="match status" value="1"/>
</dbReference>
<dbReference type="NCBIfam" id="NF011494">
    <property type="entry name" value="PRK14902.1"/>
    <property type="match status" value="1"/>
</dbReference>
<dbReference type="NCBIfam" id="TIGR00563">
    <property type="entry name" value="rsmB"/>
    <property type="match status" value="1"/>
</dbReference>
<dbReference type="PANTHER" id="PTHR22807:SF61">
    <property type="entry name" value="NOL1_NOP2_SUN FAMILY PROTEIN _ ANTITERMINATION NUSB DOMAIN-CONTAINING PROTEIN"/>
    <property type="match status" value="1"/>
</dbReference>
<dbReference type="PANTHER" id="PTHR22807">
    <property type="entry name" value="NOP2 YEAST -RELATED NOL1/NOP2/FMU SUN DOMAIN-CONTAINING"/>
    <property type="match status" value="1"/>
</dbReference>
<dbReference type="Pfam" id="PF01189">
    <property type="entry name" value="Methyltr_RsmB-F"/>
    <property type="match status" value="1"/>
</dbReference>
<dbReference type="Pfam" id="PF01029">
    <property type="entry name" value="NusB"/>
    <property type="match status" value="1"/>
</dbReference>
<dbReference type="Pfam" id="PF22458">
    <property type="entry name" value="RsmF-B_ferredox"/>
    <property type="match status" value="1"/>
</dbReference>
<dbReference type="PRINTS" id="PR02008">
    <property type="entry name" value="RCMTFAMILY"/>
</dbReference>
<dbReference type="SUPFAM" id="SSF48013">
    <property type="entry name" value="NusB-like"/>
    <property type="match status" value="1"/>
</dbReference>
<dbReference type="SUPFAM" id="SSF53335">
    <property type="entry name" value="S-adenosyl-L-methionine-dependent methyltransferases"/>
    <property type="match status" value="1"/>
</dbReference>
<dbReference type="PROSITE" id="PS01153">
    <property type="entry name" value="NOL1_NOP2_SUN"/>
    <property type="match status" value="1"/>
</dbReference>
<dbReference type="PROSITE" id="PS51686">
    <property type="entry name" value="SAM_MT_RSMB_NOP"/>
    <property type="match status" value="1"/>
</dbReference>
<sequence length="429" mass="48444">MKNTYNLRSIAAKAISQVLDQGQSLSAVLPELQKNISDKDRALLQELCFGTLRVLPQLEWCIQQLMARPMTGKQRVFHYLIMVGLYQLIYTRIPPHAALAETVEGATVLKRPQLKGLINGVLRQFQRQQVELLERAVNNDSHYLHPSWLLARIKQAYPAQWQQILDANNQRPPMWLRVNRLHHSRSEYLELLTQADINAEPHPIYRDAVRLITPCAVNHLPGFELGWVTVQDASAQGCVDLLDPQNGEQILDLCAAPGGKTTHILEAAPKAHVLAVDIDEQRLSRVKENLQRLQLQAVVRVGDGRAPDTWCGDQQFDRILLDAPCSATGVIRRHPDIKWLRRDRDISELAQLQSEIIEAIWPKLKHGGVLVYATCSILPEENQQQIAAFLQRHPEAQLTETGTTAAPGKQNLPHPEDGDGFFYAKIIKK</sequence>